<feature type="chain" id="PRO_0000054274" description="Large neutral amino acids transporter small subunit 2">
    <location>
        <begin position="1"/>
        <end position="531"/>
    </location>
</feature>
<feature type="topological domain" description="Cytoplasmic" evidence="10">
    <location>
        <begin position="1"/>
        <end position="43"/>
    </location>
</feature>
<feature type="transmembrane region" description="Helical; Name=1" evidence="1">
    <location>
        <begin position="44"/>
        <end position="64"/>
    </location>
</feature>
<feature type="topological domain" description="Extracellular" evidence="10">
    <location>
        <begin position="65"/>
        <end position="72"/>
    </location>
</feature>
<feature type="transmembrane region" description="Helical; Name=2" evidence="1">
    <location>
        <begin position="73"/>
        <end position="94"/>
    </location>
</feature>
<feature type="topological domain" description="Cytoplasmic" evidence="10">
    <location>
        <begin position="95"/>
        <end position="115"/>
    </location>
</feature>
<feature type="transmembrane region" description="Helical; Name=3" evidence="1">
    <location>
        <begin position="116"/>
        <end position="148"/>
    </location>
</feature>
<feature type="topological domain" description="Extracellular" evidence="10">
    <location>
        <begin position="149"/>
        <end position="156"/>
    </location>
</feature>
<feature type="transmembrane region" description="Helical; Name=4" evidence="1">
    <location>
        <begin position="157"/>
        <end position="177"/>
    </location>
</feature>
<feature type="topological domain" description="Cytoplasmic" evidence="10">
    <location>
        <begin position="178"/>
        <end position="180"/>
    </location>
</feature>
<feature type="transmembrane region" description="Helical; Name=5" evidence="1">
    <location>
        <begin position="181"/>
        <end position="209"/>
    </location>
</feature>
<feature type="topological domain" description="Extracellular" evidence="10">
    <location>
        <begin position="210"/>
        <end position="229"/>
    </location>
</feature>
<feature type="transmembrane region" description="Helical; Name=6" evidence="1">
    <location>
        <begin position="230"/>
        <end position="251"/>
    </location>
</feature>
<feature type="topological domain" description="Cytoplasmic" evidence="10">
    <location>
        <begin position="252"/>
        <end position="264"/>
    </location>
</feature>
<feature type="transmembrane region" description="Helical; Name=7" evidence="1">
    <location>
        <begin position="265"/>
        <end position="286"/>
    </location>
</feature>
<feature type="topological domain" description="Extracellular" evidence="10">
    <location>
        <begin position="287"/>
        <end position="311"/>
    </location>
</feature>
<feature type="transmembrane region" description="Helical; Name=8" evidence="1">
    <location>
        <begin position="312"/>
        <end position="337"/>
    </location>
</feature>
<feature type="topological domain" description="Cytoplasmic" evidence="10">
    <location>
        <begin position="338"/>
        <end position="363"/>
    </location>
</feature>
<feature type="transmembrane region" description="Helical; Name=9" evidence="1">
    <location>
        <begin position="364"/>
        <end position="381"/>
    </location>
</feature>
<feature type="topological domain" description="Extracellular" evidence="10">
    <location>
        <begin position="382"/>
        <end position="385"/>
    </location>
</feature>
<feature type="transmembrane region" description="Helical; Name=10" evidence="1">
    <location>
        <begin position="386"/>
        <end position="407"/>
    </location>
</feature>
<feature type="topological domain" description="Cytoplasmic" evidence="10">
    <location>
        <begin position="408"/>
        <end position="422"/>
    </location>
</feature>
<feature type="transmembrane region" description="Helical; Name=11" evidence="1">
    <location>
        <begin position="423"/>
        <end position="445"/>
    </location>
</feature>
<feature type="transmembrane region" description="Helical; Name=12" evidence="1">
    <location>
        <begin position="446"/>
        <end position="465"/>
    </location>
</feature>
<feature type="topological domain" description="Cytoplasmic" evidence="10">
    <location>
        <begin position="466"/>
        <end position="531"/>
    </location>
</feature>
<feature type="region of interest" description="Disordered" evidence="3">
    <location>
        <begin position="1"/>
        <end position="29"/>
    </location>
</feature>
<feature type="region of interest" description="Disordered" evidence="3">
    <location>
        <begin position="499"/>
        <end position="531"/>
    </location>
</feature>
<feature type="compositionally biased region" description="Polar residues" evidence="3">
    <location>
        <begin position="7"/>
        <end position="21"/>
    </location>
</feature>
<feature type="binding site" evidence="1">
    <location>
        <position position="52"/>
    </location>
    <ligand>
        <name>L-leucine</name>
        <dbReference type="ChEBI" id="CHEBI:57427"/>
        <note>substrate</note>
    </ligand>
</feature>
<feature type="binding site" evidence="1">
    <location>
        <position position="133"/>
    </location>
    <ligand>
        <name>L-tryptophan</name>
        <dbReference type="ChEBI" id="CHEBI:57912"/>
        <note>substrate</note>
    </ligand>
</feature>
<feature type="binding site" evidence="1">
    <location>
        <position position="245"/>
    </location>
    <ligand>
        <name>L-leucine</name>
        <dbReference type="ChEBI" id="CHEBI:57427"/>
        <note>substrate</note>
    </ligand>
</feature>
<feature type="binding site" evidence="1">
    <location>
        <position position="394"/>
    </location>
    <ligand>
        <name>L-tryptophan</name>
        <dbReference type="ChEBI" id="CHEBI:57912"/>
        <note>substrate</note>
    </ligand>
</feature>
<feature type="site" description="Important for substrate specificity" evidence="1">
    <location>
        <position position="133"/>
    </location>
</feature>
<feature type="site" description="Important for substrate specificity" evidence="1">
    <location>
        <position position="245"/>
    </location>
</feature>
<feature type="modified residue" description="Phosphoserine" evidence="11">
    <location>
        <position position="18"/>
    </location>
</feature>
<feature type="modified residue" description="Phosphoserine" evidence="11">
    <location>
        <position position="21"/>
    </location>
</feature>
<feature type="modified residue" description="Phosphoserine" evidence="11">
    <location>
        <position position="27"/>
    </location>
</feature>
<feature type="modified residue" description="Phosphoserine" evidence="11">
    <location>
        <position position="28"/>
    </location>
</feature>
<feature type="modified residue" description="Phosphoserine" evidence="2">
    <location>
        <position position="527"/>
    </location>
</feature>
<feature type="disulfide bond" description="Interchain (with C-103 in SLC3A2)" evidence="1">
    <location>
        <position position="153"/>
    </location>
</feature>
<feature type="mutagenesis site" description="Increases T2 import. Increases T3 and enables T4 import. Does not affect L-leucine and L-phenylalanine uptake." evidence="7">
    <original>Y</original>
    <variation>A</variation>
    <location>
        <position position="130"/>
    </location>
</feature>
<feature type="mutagenesis site" description="Increases T2 import. Does not affect T3 import. Does not affect L-leucine and L-phenylalanine uptake. Increases the export of both L-leucine and L-phenylalanine." evidence="7">
    <original>N</original>
    <variation>S</variation>
    <location>
        <position position="133"/>
    </location>
</feature>
<feature type="mutagenesis site" description="Increases T2 import. Does not affect T3 import. Does not affect L-leucine and L-phenylalanine uptake." evidence="7">
    <original>F</original>
    <variation>W</variation>
    <location>
        <position position="242"/>
    </location>
</feature>
<gene>
    <name type="primary">Slc7a8</name>
    <name type="synonym">Lat2</name>
</gene>
<reference key="1">
    <citation type="journal article" date="1999" name="J. Biol. Chem.">
        <title>LAT2, a new basolateral 4F2hc/CD98-associated amino acid transporter of kidney and intestine.</title>
        <authorList>
            <person name="Rossier G."/>
            <person name="Meier C."/>
            <person name="Bauch C."/>
            <person name="Summa V."/>
            <person name="Sordat B."/>
            <person name="Verrey F."/>
            <person name="Kuehn L.C."/>
        </authorList>
    </citation>
    <scope>NUCLEOTIDE SEQUENCE [MRNA]</scope>
    <scope>FUNCTION</scope>
    <scope>TRANSPORTER ACTIVITY</scope>
    <scope>BIOPHYSICOCHEMICAL PROPERTIES</scope>
    <scope>SUBUNIT</scope>
    <scope>SUBCELLULAR LOCATION</scope>
    <scope>TISSUE SPECIFICITY</scope>
    <source>
        <strain>C57BL/6J</strain>
        <tissue>Embryo</tissue>
    </source>
</reference>
<reference key="2">
    <citation type="journal article" date="1999" name="Genomics">
        <title>SLC7A8, a gene mapping within the lysinuric protein intolerance critical region, encodes a new member of the glycoprotein-associated amino acid transporter family.</title>
        <authorList>
            <person name="Bassi M.T."/>
            <person name="Sperandeo M.P."/>
            <person name="Incerti B."/>
            <person name="Bulfone A."/>
            <person name="Pepe A."/>
            <person name="Surace E.M."/>
            <person name="Gattuso C."/>
            <person name="de Grandi A."/>
            <person name="Buoninconti A."/>
            <person name="Riboni M."/>
            <person name="Manzoni M."/>
            <person name="Andria G."/>
            <person name="Ballabio A."/>
            <person name="Borsani G."/>
            <person name="Sebastio G."/>
        </authorList>
    </citation>
    <scope>NUCLEOTIDE SEQUENCE [MRNA]</scope>
</reference>
<reference key="3">
    <citation type="journal article" date="2004" name="Genome Res.">
        <title>The status, quality, and expansion of the NIH full-length cDNA project: the Mammalian Gene Collection (MGC).</title>
        <authorList>
            <consortium name="The MGC Project Team"/>
        </authorList>
    </citation>
    <scope>NUCLEOTIDE SEQUENCE [LARGE SCALE MRNA]</scope>
    <source>
        <strain>C57BL/6J</strain>
        <tissue>Brain</tissue>
    </source>
</reference>
<reference key="4">
    <citation type="journal article" date="2010" name="Cell">
        <title>A tissue-specific atlas of mouse protein phosphorylation and expression.</title>
        <authorList>
            <person name="Huttlin E.L."/>
            <person name="Jedrychowski M.P."/>
            <person name="Elias J.E."/>
            <person name="Goswami T."/>
            <person name="Rad R."/>
            <person name="Beausoleil S.A."/>
            <person name="Villen J."/>
            <person name="Haas W."/>
            <person name="Sowa M.E."/>
            <person name="Gygi S.P."/>
        </authorList>
    </citation>
    <scope>PHOSPHORYLATION [LARGE SCALE ANALYSIS] AT SER-18; SER-21; SER-27 AND SER-28</scope>
    <scope>IDENTIFICATION BY MASS SPECTROMETRY [LARGE SCALE ANALYSIS]</scope>
    <source>
        <tissue>Brain</tissue>
        <tissue>Kidney</tissue>
        <tissue>Pancreas</tissue>
        <tissue>Testis</tissue>
    </source>
</reference>
<reference key="5">
    <citation type="journal article" date="2011" name="Biochem. J.">
        <title>Aminoaciduria, but normal thyroid hormone levels and signalling, in mice lacking the amino acid and thyroid hormone transporter Slc7a8.</title>
        <authorList>
            <person name="Braun D."/>
            <person name="Wirth E.K."/>
            <person name="Wohlgemuth F."/>
            <person name="Reix N."/>
            <person name="Klein M.O."/>
            <person name="Grueters A."/>
            <person name="Koehrle J."/>
            <person name="Schweizer U."/>
        </authorList>
    </citation>
    <scope>DISRUPTION PHENOTYPE</scope>
</reference>
<reference key="6">
    <citation type="journal article" date="2015" name="Eur. Thyroid J.">
        <title>Involvement of the L-Type Amino Acid Transporter Lat2 in the Transport of 3,3'-Diiodothyronine across the Plasma Membrane.</title>
        <authorList>
            <person name="Kinne A."/>
            <person name="Wittner M."/>
            <person name="Wirth E.K."/>
            <person name="Hinz K.M."/>
            <person name="Schuelein R."/>
            <person name="Koehrle J."/>
            <person name="Krause G."/>
        </authorList>
    </citation>
    <scope>FUNCTION</scope>
    <scope>TRANSPORTER ACTIVITY</scope>
    <scope>BIOPHYSICOCHEMICAL PROPERTIES</scope>
</reference>
<reference key="7">
    <citation type="journal article" date="2017" name="Mol. Cell. Endocrinol.">
        <title>Molecular features of the L-type amino acid transporter 2 determine different import and export profiles for thyroid hormones and amino acids.</title>
        <authorList>
            <person name="Hinz K.M."/>
            <person name="Neef D."/>
            <person name="Rutz C."/>
            <person name="Furkert J."/>
            <person name="Koehrle J."/>
            <person name="Schuelein R."/>
            <person name="Krause G."/>
        </authorList>
    </citation>
    <scope>FUNCTION</scope>
    <scope>TRANSPORTER ACTIVITY</scope>
    <scope>BIOPHYSICOCHEMICAL PROPERTIES</scope>
    <scope>SUBCELLULAR LOCATION</scope>
    <scope>MUTAGENESIS OF TYR-130; ASN-133 AND PHE-242</scope>
</reference>
<reference key="8">
    <citation type="journal article" date="2018" name="Elife">
        <title>Mutations in L-type amino acid transporter-2 support SLC7A8 as a novel gene involved in age-related hearing loss.</title>
        <authorList>
            <person name="Espino Guarch M."/>
            <person name="Font-Llitjos M."/>
            <person name="Murillo-Cuesta S."/>
            <person name="Errasti-Murugarren E."/>
            <person name="Celaya A.M."/>
            <person name="Girotto G."/>
            <person name="Vuckovic D."/>
            <person name="Mezzavilla M."/>
            <person name="Vilches C."/>
            <person name="Bodoy S."/>
            <person name="Sahun I."/>
            <person name="Gonzalez L."/>
            <person name="Prat E."/>
            <person name="Zorzano A."/>
            <person name="Dierssen M."/>
            <person name="Varela-Nieto I."/>
            <person name="Gasparini P."/>
            <person name="Palacin M."/>
            <person name="Nunes V."/>
        </authorList>
    </citation>
    <scope>DISRUPTION PHENOTYPE</scope>
    <scope>TISSUE SPECIFICITY</scope>
    <scope>SUBCELLULAR LOCATION</scope>
    <scope>FUNCTION</scope>
</reference>
<reference key="9">
    <citation type="journal article" date="2019" name="Front. Physiol.">
        <title>Dysfunctional LAT2 Amino Acid Transporter Is Associated With Cataract in Mouse and Humans.</title>
        <authorList>
            <person name="Knoepfel E.B."/>
            <person name="Vilches C."/>
            <person name="Camargo S.M.R."/>
            <person name="Errasti-Murugarren E."/>
            <person name="Staeubli A."/>
            <person name="Mayayo C."/>
            <person name="Munier F.L."/>
            <person name="Miroshnikova N."/>
            <person name="Poncet N."/>
            <person name="Junza A."/>
            <person name="Bhattacharya S.S."/>
            <person name="Prat E."/>
            <person name="Berry V."/>
            <person name="Berger W."/>
            <person name="Heon E."/>
            <person name="Moore A.T."/>
            <person name="Yanes O."/>
            <person name="Nunes V."/>
            <person name="Palacin M."/>
            <person name="Verrey F."/>
            <person name="Kloeckener-Gruissem B."/>
        </authorList>
    </citation>
    <scope>SUBCELLULAR LOCATION</scope>
    <scope>DISRUPTION PHENOTYPE</scope>
</reference>
<accession>Q9QXW9</accession>
<keyword id="KW-0029">Amino-acid transport</keyword>
<keyword id="KW-0050">Antiport</keyword>
<keyword id="KW-1003">Cell membrane</keyword>
<keyword id="KW-1015">Disulfide bond</keyword>
<keyword id="KW-0472">Membrane</keyword>
<keyword id="KW-0597">Phosphoprotein</keyword>
<keyword id="KW-1185">Reference proteome</keyword>
<keyword id="KW-0812">Transmembrane</keyword>
<keyword id="KW-1133">Transmembrane helix</keyword>
<keyword id="KW-0813">Transport</keyword>
<evidence type="ECO:0000250" key="1">
    <source>
        <dbReference type="UniProtKB" id="Q9UHI5"/>
    </source>
</evidence>
<evidence type="ECO:0000250" key="2">
    <source>
        <dbReference type="UniProtKB" id="Q9WVR6"/>
    </source>
</evidence>
<evidence type="ECO:0000256" key="3">
    <source>
        <dbReference type="SAM" id="MobiDB-lite"/>
    </source>
</evidence>
<evidence type="ECO:0000269" key="4">
    <source>
    </source>
</evidence>
<evidence type="ECO:0000269" key="5">
    <source>
    </source>
</evidence>
<evidence type="ECO:0000269" key="6">
    <source>
    </source>
</evidence>
<evidence type="ECO:0000269" key="7">
    <source>
    </source>
</evidence>
<evidence type="ECO:0000269" key="8">
    <source>
    </source>
</evidence>
<evidence type="ECO:0000269" key="9">
    <source>
    </source>
</evidence>
<evidence type="ECO:0000305" key="10"/>
<evidence type="ECO:0007744" key="11">
    <source>
    </source>
</evidence>
<comment type="function">
    <text evidence="1 2 4 6 7 8">Associates with SLC3A2 to form a functional heterodimeric complex that translocates small and large neutral amino acids with broad specificity and a stoichiometry of 1:1 (PubMed:10574970). Functions as amino acid antiporter mediating the influx of extracellular essential amino acids mainly in exchange with the efflux of highly concentrated intracellular amino acids. Has relatively symmetrical selectivities but strongly asymmetrical substrate affinities at both the intracellular and extracellular sides of the transporter. This asymmetry allows SLC7A8 to regulate intracellular amino acid pools (mM concentrations) by exchange with external amino acids (uM concentration range), equilibrating the relative concentrations of different amino acids across the plasma membrane instead of mediating their net uptake. May play an essential role in the reabsorption of neutral amino acids from the epithelial cells to the bloodstream in the kidney. Involved in the uptake of methylmercury (MeHg) when administered as the L-cysteine or D,L-homocysteine complexes, and hence plays a role in metal ion homeostasis and toxicity. Involved in the cellular activity of small molecular weight nitrosothiols, via the stereoselective transport of L-nitrosocysteine (L-CNSO) across the transmembrane (By similarity). Imports the thyroid hormone diiodothyronine (T2) and to a smaller extent triiodothyronine (T3) but not rT 3 or thyroxine (T4) (PubMed:26601072, PubMed:28108384). Mediates the uptake of L-DOPA (By similarity). May participate in auditory function (PubMed:29355479).</text>
</comment>
<comment type="catalytic activity">
    <reaction evidence="1">
        <text>L-histidine(in) + L-phenylalanine(out) = L-histidine(out) + L-phenylalanine(in)</text>
        <dbReference type="Rhea" id="RHEA:71003"/>
        <dbReference type="ChEBI" id="CHEBI:57595"/>
        <dbReference type="ChEBI" id="CHEBI:58095"/>
    </reaction>
</comment>
<comment type="catalytic activity">
    <reaction evidence="1">
        <text>L-tryptophan(in) + L-phenylalanine(out) = L-tryptophan(out) + L-phenylalanine(in)</text>
        <dbReference type="Rhea" id="RHEA:71007"/>
        <dbReference type="ChEBI" id="CHEBI:57912"/>
        <dbReference type="ChEBI" id="CHEBI:58095"/>
    </reaction>
</comment>
<comment type="catalytic activity">
    <reaction evidence="1">
        <text>L-isoleucine(in) + L-phenylalanine(out) = L-isoleucine(out) + L-phenylalanine(in)</text>
        <dbReference type="Rhea" id="RHEA:71011"/>
        <dbReference type="ChEBI" id="CHEBI:58045"/>
        <dbReference type="ChEBI" id="CHEBI:58095"/>
    </reaction>
</comment>
<comment type="catalytic activity">
    <reaction evidence="1">
        <text>L-valine(in) + L-phenylalanine(out) = L-valine(out) + L-phenylalanine(in)</text>
        <dbReference type="Rhea" id="RHEA:71019"/>
        <dbReference type="ChEBI" id="CHEBI:57762"/>
        <dbReference type="ChEBI" id="CHEBI:58095"/>
    </reaction>
</comment>
<comment type="catalytic activity">
    <reaction evidence="1">
        <text>L-leucine(in) + L-phenylalanine(out) = L-leucine(out) + L-phenylalanine(in)</text>
        <dbReference type="Rhea" id="RHEA:71023"/>
        <dbReference type="ChEBI" id="CHEBI:57427"/>
        <dbReference type="ChEBI" id="CHEBI:58095"/>
    </reaction>
</comment>
<comment type="catalytic activity">
    <reaction evidence="1">
        <text>L-glutamine(in) + L-phenylalanine(out) = L-glutamine(out) + L-phenylalanine(in)</text>
        <dbReference type="Rhea" id="RHEA:71027"/>
        <dbReference type="ChEBI" id="CHEBI:58095"/>
        <dbReference type="ChEBI" id="CHEBI:58359"/>
    </reaction>
</comment>
<comment type="catalytic activity">
    <reaction evidence="1">
        <text>L-cysteine(in) + L-phenylalanine(out) = L-cysteine(out) + L-phenylalanine(in)</text>
        <dbReference type="Rhea" id="RHEA:71031"/>
        <dbReference type="ChEBI" id="CHEBI:35235"/>
        <dbReference type="ChEBI" id="CHEBI:58095"/>
    </reaction>
</comment>
<comment type="catalytic activity">
    <reaction evidence="1">
        <text>L-phenylalanine(out) + L-methionine(in) = L-phenylalanine(in) + L-methionine(out)</text>
        <dbReference type="Rhea" id="RHEA:71039"/>
        <dbReference type="ChEBI" id="CHEBI:57844"/>
        <dbReference type="ChEBI" id="CHEBI:58095"/>
    </reaction>
</comment>
<comment type="catalytic activity">
    <reaction evidence="1">
        <text>L-leucine(out) + L-methionine(in) = L-leucine(in) + L-methionine(out)</text>
        <dbReference type="Rhea" id="RHEA:71051"/>
        <dbReference type="ChEBI" id="CHEBI:57427"/>
        <dbReference type="ChEBI" id="CHEBI:57844"/>
    </reaction>
</comment>
<comment type="catalytic activity">
    <reaction evidence="1">
        <text>L-cysteine(out) + L-methionine(in) = L-cysteine(in) + L-methionine(out)</text>
        <dbReference type="Rhea" id="RHEA:71055"/>
        <dbReference type="ChEBI" id="CHEBI:35235"/>
        <dbReference type="ChEBI" id="CHEBI:57844"/>
    </reaction>
</comment>
<comment type="catalytic activity">
    <reaction evidence="1">
        <text>S-methylmercury-L-cysteine(out) + L-methionine(in) = S-methylmercury-L-cysteine(in) + L-methionine(out)</text>
        <dbReference type="Rhea" id="RHEA:71103"/>
        <dbReference type="ChEBI" id="CHEBI:57844"/>
        <dbReference type="ChEBI" id="CHEBI:190186"/>
    </reaction>
</comment>
<comment type="catalytic activity">
    <reaction evidence="1">
        <text>S-methylmercury-L-cysteine(in) + L-leucine(out) = S-methylmercury-L-cysteine(out) + L-leucine(in)</text>
        <dbReference type="Rhea" id="RHEA:71107"/>
        <dbReference type="ChEBI" id="CHEBI:57427"/>
        <dbReference type="ChEBI" id="CHEBI:190186"/>
    </reaction>
</comment>
<comment type="catalytic activity">
    <reaction evidence="1">
        <text>S-methylmercury-L-cysteine(in) + L-phenylalanine(out) = S-methylmercury-L-cysteine(out) + L-phenylalanine(in)</text>
        <dbReference type="Rhea" id="RHEA:71111"/>
        <dbReference type="ChEBI" id="CHEBI:58095"/>
        <dbReference type="ChEBI" id="CHEBI:190186"/>
    </reaction>
</comment>
<comment type="catalytic activity">
    <reaction evidence="1">
        <text>L-phenylalanine(out) + L-serine(in) = L-phenylalanine(in) + L-serine(out)</text>
        <dbReference type="Rhea" id="RHEA:71035"/>
        <dbReference type="ChEBI" id="CHEBI:33384"/>
        <dbReference type="ChEBI" id="CHEBI:58095"/>
    </reaction>
</comment>
<comment type="catalytic activity">
    <reaction evidence="1">
        <text>L-phenylalanine(out) + glycine(in) = L-phenylalanine(in) + glycine(out)</text>
        <dbReference type="Rhea" id="RHEA:71047"/>
        <dbReference type="ChEBI" id="CHEBI:57305"/>
        <dbReference type="ChEBI" id="CHEBI:58095"/>
    </reaction>
</comment>
<comment type="catalytic activity">
    <reaction evidence="1">
        <text>L-phenylalanine(out) + L-alanine(in) = L-phenylalanine(in) + L-alanine(out)</text>
        <dbReference type="Rhea" id="RHEA:71043"/>
        <dbReference type="ChEBI" id="CHEBI:57972"/>
        <dbReference type="ChEBI" id="CHEBI:58095"/>
    </reaction>
</comment>
<comment type="catalytic activity">
    <reaction evidence="1">
        <text>L-tryptophan(in) = L-tryptophan(out)</text>
        <dbReference type="Rhea" id="RHEA:70947"/>
        <dbReference type="ChEBI" id="CHEBI:57912"/>
    </reaction>
</comment>
<comment type="catalytic activity">
    <reaction evidence="7">
        <text>3,3',5-triiodo-L-thyronine(out) = 3,3',5-triiodo-L-thyronine(in)</text>
        <dbReference type="Rhea" id="RHEA:71811"/>
        <dbReference type="ChEBI" id="CHEBI:533015"/>
    </reaction>
    <physiologicalReaction direction="left-to-right" evidence="7">
        <dbReference type="Rhea" id="RHEA:71812"/>
    </physiologicalReaction>
</comment>
<comment type="catalytic activity">
    <reaction evidence="6 7">
        <text>3,3'-diiodo-L-thyronine(out) = 3,3'-diiodo-L-thyronine(in)</text>
        <dbReference type="Rhea" id="RHEA:71823"/>
        <dbReference type="ChEBI" id="CHEBI:176514"/>
    </reaction>
    <physiologicalReaction direction="left-to-right" evidence="7">
        <dbReference type="Rhea" id="RHEA:71824"/>
    </physiologicalReaction>
</comment>
<comment type="catalytic activity">
    <reaction evidence="2">
        <text>L-dopa(out) + L-phenylalanine(in) = L-dopa(in) + L-phenylalanine(out)</text>
        <dbReference type="Rhea" id="RHEA:71439"/>
        <dbReference type="ChEBI" id="CHEBI:57504"/>
        <dbReference type="ChEBI" id="CHEBI:58095"/>
    </reaction>
</comment>
<comment type="biophysicochemical properties">
    <kinetics>
        <KM evidence="4">12.2 uM for L-phenylalanine</KM>
        <KM evidence="4">48 uM for L-leucine</KM>
        <KM evidence="4">167 uM for L-alanine</KM>
        <KM evidence="4">294 uM for L-histidine</KM>
        <KM evidence="4">275 uM for L-glutamine</KM>
        <KM evidence="7">16.2 uM for 3,3'-diiodo-L-thyronine</KM>
        <KM evidence="6">18.6 uM for 3,3'-diiodo-L-thyronine</KM>
    </kinetics>
</comment>
<comment type="subunit">
    <text evidence="1 4">Disulfide-linked heterodimer composed of the catalytic light chain subunit SLC7A8 and the heavy chain subunit SLC3A2 (PubMed:10574970). SLC3A2 acts as a chaperone for correct plasma membrane trafficking and stabilization of SLC7A8 and modulates the substrate affinity and specificity of SLC7A8. ICAM-1 associates with the heterodimer SLC3A2/SLC7A8; facilitates leucine uptake (By similarity).</text>
</comment>
<comment type="subcellular location">
    <subcellularLocation>
        <location evidence="7 8 9">Cell membrane</location>
        <topology evidence="1">Multi-pass membrane protein</topology>
    </subcellularLocation>
    <subcellularLocation>
        <location evidence="4">Basolateral cell membrane</location>
        <topology evidence="1">Multi-pass membrane protein</topology>
    </subcellularLocation>
    <text evidence="1">When coexpressed with SLC3A2/4F2hc, is localized to the plasma membrane. Colocalized with SLC3A2/4F2hc at the basolateral membrane of kidney cortex proximal tubules and small intestine epithelia of the villi.</text>
</comment>
<comment type="tissue specificity">
    <text evidence="4 8">Strongly expressed in kidney and small intestine. Moderately present in placenta, ovary and brain (PubMed:10574970, PubMed:29355479). Expressed in the inner ear (PubMed:29355479).</text>
</comment>
<comment type="disruption phenotype">
    <text evidence="5 8 9">Slc7a8-deficient mice present normal development and growth. Only a slightly altered coordination of movements is observed in Slc7a8-deficient mice. Circulating thyroid hormones, thyrotropin and thyroid hormone-responsive genes remain unchange. Functional compensation by other amino acid transporters might explain the lack of a severe phenotype (PubMed:21726201). The lack of Slc7a8 results in a significant increase of cataracts in old animals, in particularly in old females (PubMed:31231240). Slc7a8-deficient mice dysplay a hearing loss defect with incomplete penetrance affecting mainly high-frequency sounds, hearing loss severity increases with age in Slc7a8-deficient mice (PubMed:29355479).</text>
</comment>
<comment type="similarity">
    <text evidence="10">Belongs to the amino acid-polyamine-organocation (APC) superfamily. L-type amino acid transporter (LAT) (TC 2.A.3.8) family.</text>
</comment>
<organism>
    <name type="scientific">Mus musculus</name>
    <name type="common">Mouse</name>
    <dbReference type="NCBI Taxonomy" id="10090"/>
    <lineage>
        <taxon>Eukaryota</taxon>
        <taxon>Metazoa</taxon>
        <taxon>Chordata</taxon>
        <taxon>Craniata</taxon>
        <taxon>Vertebrata</taxon>
        <taxon>Euteleostomi</taxon>
        <taxon>Mammalia</taxon>
        <taxon>Eutheria</taxon>
        <taxon>Euarchontoglires</taxon>
        <taxon>Glires</taxon>
        <taxon>Rodentia</taxon>
        <taxon>Myomorpha</taxon>
        <taxon>Muroidea</taxon>
        <taxon>Muridae</taxon>
        <taxon>Murinae</taxon>
        <taxon>Mus</taxon>
        <taxon>Mus</taxon>
    </lineage>
</organism>
<dbReference type="EMBL" id="AF171668">
    <property type="protein sequence ID" value="AAF20380.1"/>
    <property type="molecule type" value="mRNA"/>
</dbReference>
<dbReference type="EMBL" id="Y19022">
    <property type="protein sequence ID" value="CAB69072.1"/>
    <property type="molecule type" value="mRNA"/>
</dbReference>
<dbReference type="EMBL" id="BC059004">
    <property type="protein sequence ID" value="AAH59004.1"/>
    <property type="molecule type" value="mRNA"/>
</dbReference>
<dbReference type="CCDS" id="CCDS27101.1"/>
<dbReference type="RefSeq" id="NP_058668.1">
    <property type="nucleotide sequence ID" value="NM_016972.2"/>
</dbReference>
<dbReference type="SMR" id="Q9QXW9"/>
<dbReference type="BioGRID" id="206166">
    <property type="interactions" value="2"/>
</dbReference>
<dbReference type="FunCoup" id="Q9QXW9">
    <property type="interactions" value="221"/>
</dbReference>
<dbReference type="STRING" id="10090.ENSMUSP00000022787"/>
<dbReference type="iPTMnet" id="Q9QXW9"/>
<dbReference type="PhosphoSitePlus" id="Q9QXW9"/>
<dbReference type="SwissPalm" id="Q9QXW9"/>
<dbReference type="jPOST" id="Q9QXW9"/>
<dbReference type="PaxDb" id="10090-ENSMUSP00000022787"/>
<dbReference type="PeptideAtlas" id="Q9QXW9"/>
<dbReference type="ProteomicsDB" id="264975"/>
<dbReference type="Antibodypedia" id="22403">
    <property type="antibodies" value="245 antibodies from 24 providers"/>
</dbReference>
<dbReference type="DNASU" id="50934"/>
<dbReference type="Ensembl" id="ENSMUST00000022787.8">
    <property type="protein sequence ID" value="ENSMUSP00000022787.7"/>
    <property type="gene ID" value="ENSMUSG00000022180.8"/>
</dbReference>
<dbReference type="GeneID" id="50934"/>
<dbReference type="KEGG" id="mmu:50934"/>
<dbReference type="UCSC" id="uc007txa.1">
    <property type="organism name" value="mouse"/>
</dbReference>
<dbReference type="AGR" id="MGI:1355323"/>
<dbReference type="CTD" id="23428"/>
<dbReference type="MGI" id="MGI:1355323">
    <property type="gene designation" value="Slc7a8"/>
</dbReference>
<dbReference type="VEuPathDB" id="HostDB:ENSMUSG00000022180"/>
<dbReference type="eggNOG" id="KOG1287">
    <property type="taxonomic scope" value="Eukaryota"/>
</dbReference>
<dbReference type="GeneTree" id="ENSGT00940000158278"/>
<dbReference type="HOGENOM" id="CLU_007946_3_0_1"/>
<dbReference type="InParanoid" id="Q9QXW9"/>
<dbReference type="OMA" id="WVSNAAL"/>
<dbReference type="OrthoDB" id="3257095at2759"/>
<dbReference type="PhylomeDB" id="Q9QXW9"/>
<dbReference type="TreeFam" id="TF313355"/>
<dbReference type="Reactome" id="R-MMU-210991">
    <property type="pathway name" value="Basigin interactions"/>
</dbReference>
<dbReference type="Reactome" id="R-MMU-352230">
    <property type="pathway name" value="Amino acid transport across the plasma membrane"/>
</dbReference>
<dbReference type="SABIO-RK" id="Q9QXW9"/>
<dbReference type="BioGRID-ORCS" id="50934">
    <property type="hits" value="3 hits in 77 CRISPR screens"/>
</dbReference>
<dbReference type="ChiTaRS" id="Slc7a8">
    <property type="organism name" value="mouse"/>
</dbReference>
<dbReference type="PRO" id="PR:Q9QXW9"/>
<dbReference type="Proteomes" id="UP000000589">
    <property type="component" value="Chromosome 14"/>
</dbReference>
<dbReference type="RNAct" id="Q9QXW9">
    <property type="molecule type" value="protein"/>
</dbReference>
<dbReference type="Bgee" id="ENSMUSG00000022180">
    <property type="expression patterns" value="Expressed in yolk sac and 167 other cell types or tissues"/>
</dbReference>
<dbReference type="GO" id="GO:0016324">
    <property type="term" value="C:apical plasma membrane"/>
    <property type="evidence" value="ECO:0000314"/>
    <property type="project" value="ARUK-UCL"/>
</dbReference>
<dbReference type="GO" id="GO:0016323">
    <property type="term" value="C:basolateral plasma membrane"/>
    <property type="evidence" value="ECO:0007669"/>
    <property type="project" value="UniProtKB-SubCell"/>
</dbReference>
<dbReference type="GO" id="GO:0031528">
    <property type="term" value="C:microvillus membrane"/>
    <property type="evidence" value="ECO:0007669"/>
    <property type="project" value="Ensembl"/>
</dbReference>
<dbReference type="GO" id="GO:0005886">
    <property type="term" value="C:plasma membrane"/>
    <property type="evidence" value="ECO:0000247"/>
    <property type="project" value="MGI"/>
</dbReference>
<dbReference type="GO" id="GO:0005275">
    <property type="term" value="F:amine transmembrane transporter activity"/>
    <property type="evidence" value="ECO:0000247"/>
    <property type="project" value="MGI"/>
</dbReference>
<dbReference type="GO" id="GO:0015297">
    <property type="term" value="F:antiporter activity"/>
    <property type="evidence" value="ECO:0007669"/>
    <property type="project" value="UniProtKB-KW"/>
</dbReference>
<dbReference type="GO" id="GO:0015187">
    <property type="term" value="F:glycine transmembrane transporter activity"/>
    <property type="evidence" value="ECO:0000315"/>
    <property type="project" value="ARUK-UCL"/>
</dbReference>
<dbReference type="GO" id="GO:0015180">
    <property type="term" value="F:L-alanine transmembrane transporter activity"/>
    <property type="evidence" value="ECO:0007669"/>
    <property type="project" value="Ensembl"/>
</dbReference>
<dbReference type="GO" id="GO:0015179">
    <property type="term" value="F:L-amino acid transmembrane transporter activity"/>
    <property type="evidence" value="ECO:0000314"/>
    <property type="project" value="MGI"/>
</dbReference>
<dbReference type="GO" id="GO:0015190">
    <property type="term" value="F:L-leucine transmembrane transporter activity"/>
    <property type="evidence" value="ECO:0007669"/>
    <property type="project" value="Ensembl"/>
</dbReference>
<dbReference type="GO" id="GO:0015175">
    <property type="term" value="F:neutral L-amino acid transmembrane transporter activity"/>
    <property type="evidence" value="ECO:0000315"/>
    <property type="project" value="ARUK-UCL"/>
</dbReference>
<dbReference type="GO" id="GO:0046982">
    <property type="term" value="F:protein heterodimerization activity"/>
    <property type="evidence" value="ECO:0007669"/>
    <property type="project" value="Ensembl"/>
</dbReference>
<dbReference type="GO" id="GO:0015349">
    <property type="term" value="F:thyroid hormone transmembrane transporter activity"/>
    <property type="evidence" value="ECO:0000314"/>
    <property type="project" value="UniProtKB"/>
</dbReference>
<dbReference type="GO" id="GO:0019534">
    <property type="term" value="F:toxin transmembrane transporter activity"/>
    <property type="evidence" value="ECO:0007669"/>
    <property type="project" value="Ensembl"/>
</dbReference>
<dbReference type="GO" id="GO:0006865">
    <property type="term" value="P:amino acid transport"/>
    <property type="evidence" value="ECO:0000247"/>
    <property type="project" value="MGI"/>
</dbReference>
<dbReference type="GO" id="GO:0015816">
    <property type="term" value="P:glycine transport"/>
    <property type="evidence" value="ECO:0000315"/>
    <property type="project" value="ARUK-UCL"/>
</dbReference>
<dbReference type="GO" id="GO:1904273">
    <property type="term" value="P:L-alanine import across plasma membrane"/>
    <property type="evidence" value="ECO:0007669"/>
    <property type="project" value="Ensembl"/>
</dbReference>
<dbReference type="GO" id="GO:0015807">
    <property type="term" value="P:L-amino acid transport"/>
    <property type="evidence" value="ECO:0000314"/>
    <property type="project" value="MGI"/>
</dbReference>
<dbReference type="GO" id="GO:1903801">
    <property type="term" value="P:L-leucine import across plasma membrane"/>
    <property type="evidence" value="ECO:0007669"/>
    <property type="project" value="Ensembl"/>
</dbReference>
<dbReference type="GO" id="GO:0015820">
    <property type="term" value="P:L-leucine transport"/>
    <property type="evidence" value="ECO:0000315"/>
    <property type="project" value="ARUK-UCL"/>
</dbReference>
<dbReference type="GO" id="GO:0035524">
    <property type="term" value="P:proline transmembrane transport"/>
    <property type="evidence" value="ECO:0000315"/>
    <property type="project" value="ARUK-UCL"/>
</dbReference>
<dbReference type="GO" id="GO:0070327">
    <property type="term" value="P:thyroid hormone transport"/>
    <property type="evidence" value="ECO:0000314"/>
    <property type="project" value="UniProtKB"/>
</dbReference>
<dbReference type="GO" id="GO:0015827">
    <property type="term" value="P:tryptophan transport"/>
    <property type="evidence" value="ECO:0000315"/>
    <property type="project" value="ARUK-UCL"/>
</dbReference>
<dbReference type="GO" id="GO:0015829">
    <property type="term" value="P:valine transport"/>
    <property type="evidence" value="ECO:0000315"/>
    <property type="project" value="ARUK-UCL"/>
</dbReference>
<dbReference type="FunFam" id="1.20.1740.10:FF:000008">
    <property type="entry name" value="large neutral amino acids transporter small subunit 2"/>
    <property type="match status" value="1"/>
</dbReference>
<dbReference type="Gene3D" id="1.20.1740.10">
    <property type="entry name" value="Amino acid/polyamine transporter I"/>
    <property type="match status" value="1"/>
</dbReference>
<dbReference type="InterPro" id="IPR002293">
    <property type="entry name" value="AA/rel_permease1"/>
</dbReference>
<dbReference type="InterPro" id="IPR050598">
    <property type="entry name" value="AminoAcid_Transporter"/>
</dbReference>
<dbReference type="InterPro" id="IPR004760">
    <property type="entry name" value="L_AA_transporter"/>
</dbReference>
<dbReference type="NCBIfam" id="TIGR00911">
    <property type="entry name" value="2A0308"/>
    <property type="match status" value="1"/>
</dbReference>
<dbReference type="PANTHER" id="PTHR11785">
    <property type="entry name" value="AMINO ACID TRANSPORTER"/>
    <property type="match status" value="1"/>
</dbReference>
<dbReference type="PANTHER" id="PTHR11785:SF113">
    <property type="entry name" value="LARGE NEUTRAL AMINO ACIDS TRANSPORTER SMALL SUBUNIT 2"/>
    <property type="match status" value="1"/>
</dbReference>
<dbReference type="Pfam" id="PF13520">
    <property type="entry name" value="AA_permease_2"/>
    <property type="match status" value="1"/>
</dbReference>
<dbReference type="PIRSF" id="PIRSF006060">
    <property type="entry name" value="AA_transporter"/>
    <property type="match status" value="1"/>
</dbReference>
<sequence length="531" mass="57873">MEKGARQRNNTAKNHPGSDTSPEAEASSGGGGVALKKEIGLVSACGIIVGNIIGSGIFVSPKGVLENAGSVGLALIVWIVTGIITAVGALCYAELGVTIPKSGGDYSYVKDIFGGLAGFLRLWIAVLVIYPTNQAVIALTFSNYVLQPLFPTCFPPESGLRLLAAICLLLLTWVNCSSVRWATRVQDIFTAGKLLALALIIIMGIVQICKGEFFWLEPKNAFENFQEPDIGLVALAFLQGSFAYGGWNFLNYVTEELVDPYKNLPRAIFISIPLVTFVYVFANIAYVTAMSPQELLASNAVAVTFGEKLLGVMAWIMPISVALSTFGGVNGSLFTSSRLFFAGAREGHLPSVLAMIHVKRCTPIPALLFTCLSTLLMLVTSDMYTLINYVGFINYLFYGVTVAGQIVLRWKKPDIPRPIKVSLLFPIIYLLFWAFLLIFSLWSEPVVCGIGLAIMLTGVPVYFLGVYWQHKPKCFNDFIKSLTLVSQKMCVVVYPQEGNSGAEETTDDLEEQHKPIFKPTPVKDPDSEEQP</sequence>
<name>LAT2_MOUSE</name>
<proteinExistence type="evidence at protein level"/>
<protein>
    <recommendedName>
        <fullName>Large neutral amino acids transporter small subunit 2</fullName>
    </recommendedName>
    <alternativeName>
        <fullName>L-type amino acid transporter 2</fullName>
        <shortName>mLAT2</shortName>
    </alternativeName>
    <alternativeName>
        <fullName>Solute carrier family 7 member 8</fullName>
    </alternativeName>
</protein>